<protein>
    <recommendedName>
        <fullName evidence="1">Cytochrome b559 subunit beta</fullName>
    </recommendedName>
    <alternativeName>
        <fullName evidence="1">PSII reaction center subunit VI</fullName>
    </alternativeName>
</protein>
<comment type="function">
    <text evidence="1">This b-type cytochrome is tightly associated with the reaction center of photosystem II (PSII). PSII is a light-driven water:plastoquinone oxidoreductase that uses light energy to abstract electrons from H(2)O, generating O(2) and a proton gradient subsequently used for ATP formation. It consists of a core antenna complex that captures photons, and an electron transfer chain that converts photonic excitation into a charge separation.</text>
</comment>
<comment type="cofactor">
    <cofactor evidence="1">
        <name>heme b</name>
        <dbReference type="ChEBI" id="CHEBI:60344"/>
    </cofactor>
    <text evidence="1">With its partner (PsbE) binds heme. PSII binds additional chlorophylls, carotenoids and specific lipids.</text>
</comment>
<comment type="subunit">
    <text evidence="1 2">Heterodimer of an alpha subunit and a beta subunit. PSII is composed of 1 copy each of membrane proteins PsbA, PsbB, PsbC, PsbD, PsbE, PsbF, PsbH, PsbI, PsbJ, PsbK, PsbL, PsbM, PsbT, PsbX, PsbY, PsbZ, Psb30/Ycf12, at least 3 peripheral proteins of the oxygen-evolving complex and a large number of cofactors. It forms dimeric complexes (By similarity). Detected in both etioplasts and green leaves; PSII is only assembled in green leaves (PubMed:19137553).</text>
</comment>
<comment type="subcellular location">
    <subcellularLocation>
        <location evidence="1 3">Plastid</location>
        <location evidence="1 3">Chloroplast thylakoid membrane</location>
        <topology evidence="1 3">Single-pass membrane protein</topology>
    </subcellularLocation>
</comment>
<comment type="similarity">
    <text evidence="1">Belongs to the PsbE/PsbF family.</text>
</comment>
<dbReference type="EMBL" id="X14108">
    <property type="protein sequence ID" value="CAA32271.1"/>
    <property type="molecule type" value="Genomic_DNA"/>
</dbReference>
<dbReference type="EMBL" id="M35616">
    <property type="protein sequence ID" value="AAA84049.1"/>
    <property type="molecule type" value="Genomic_DNA"/>
</dbReference>
<dbReference type="EMBL" id="M35977">
    <property type="protein sequence ID" value="AAA84045.1"/>
    <property type="molecule type" value="Genomic_DNA"/>
</dbReference>
<dbReference type="EMBL" id="EF115541">
    <property type="protein sequence ID" value="ABK79428.1"/>
    <property type="molecule type" value="Genomic_DNA"/>
</dbReference>
<dbReference type="PIR" id="S04063">
    <property type="entry name" value="S04063"/>
</dbReference>
<dbReference type="RefSeq" id="YP_010144441.1">
    <property type="nucleotide sequence ID" value="NC_056985.1"/>
</dbReference>
<dbReference type="RefSeq" id="YP_874668.1">
    <property type="nucleotide sequence ID" value="NC_008590.1"/>
</dbReference>
<dbReference type="SMR" id="P60126"/>
<dbReference type="GeneID" id="4525054"/>
<dbReference type="GeneID" id="67140660"/>
<dbReference type="GO" id="GO:0009535">
    <property type="term" value="C:chloroplast thylakoid membrane"/>
    <property type="evidence" value="ECO:0007669"/>
    <property type="project" value="UniProtKB-SubCell"/>
</dbReference>
<dbReference type="GO" id="GO:0009539">
    <property type="term" value="C:photosystem II reaction center"/>
    <property type="evidence" value="ECO:0007669"/>
    <property type="project" value="InterPro"/>
</dbReference>
<dbReference type="GO" id="GO:0009055">
    <property type="term" value="F:electron transfer activity"/>
    <property type="evidence" value="ECO:0007669"/>
    <property type="project" value="UniProtKB-UniRule"/>
</dbReference>
<dbReference type="GO" id="GO:0020037">
    <property type="term" value="F:heme binding"/>
    <property type="evidence" value="ECO:0007669"/>
    <property type="project" value="InterPro"/>
</dbReference>
<dbReference type="GO" id="GO:0005506">
    <property type="term" value="F:iron ion binding"/>
    <property type="evidence" value="ECO:0007669"/>
    <property type="project" value="UniProtKB-UniRule"/>
</dbReference>
<dbReference type="GO" id="GO:0009767">
    <property type="term" value="P:photosynthetic electron transport chain"/>
    <property type="evidence" value="ECO:0007669"/>
    <property type="project" value="InterPro"/>
</dbReference>
<dbReference type="HAMAP" id="MF_00643">
    <property type="entry name" value="PSII_PsbF"/>
    <property type="match status" value="1"/>
</dbReference>
<dbReference type="InterPro" id="IPR006241">
    <property type="entry name" value="PSII_cyt_b559_bsu"/>
</dbReference>
<dbReference type="InterPro" id="IPR006216">
    <property type="entry name" value="PSII_cyt_b559_CS"/>
</dbReference>
<dbReference type="InterPro" id="IPR013081">
    <property type="entry name" value="PSII_cyt_b559_N"/>
</dbReference>
<dbReference type="NCBIfam" id="TIGR01333">
    <property type="entry name" value="cyt_b559_beta"/>
    <property type="match status" value="1"/>
</dbReference>
<dbReference type="Pfam" id="PF00283">
    <property type="entry name" value="Cytochrom_B559"/>
    <property type="match status" value="1"/>
</dbReference>
<dbReference type="PIRSF" id="PIRSF000037">
    <property type="entry name" value="PsbF"/>
    <property type="match status" value="1"/>
</dbReference>
<dbReference type="SUPFAM" id="SSF161045">
    <property type="entry name" value="Cytochrome b559 subunits"/>
    <property type="match status" value="1"/>
</dbReference>
<dbReference type="PROSITE" id="PS00537">
    <property type="entry name" value="CYTOCHROME_B559"/>
    <property type="match status" value="1"/>
</dbReference>
<keyword id="KW-0150">Chloroplast</keyword>
<keyword id="KW-0249">Electron transport</keyword>
<keyword id="KW-0349">Heme</keyword>
<keyword id="KW-0408">Iron</keyword>
<keyword id="KW-0472">Membrane</keyword>
<keyword id="KW-0479">Metal-binding</keyword>
<keyword id="KW-0602">Photosynthesis</keyword>
<keyword id="KW-0604">Photosystem II</keyword>
<keyword id="KW-0934">Plastid</keyword>
<keyword id="KW-0793">Thylakoid</keyword>
<keyword id="KW-0812">Transmembrane</keyword>
<keyword id="KW-1133">Transmembrane helix</keyword>
<keyword id="KW-0813">Transport</keyword>
<proteinExistence type="evidence at protein level"/>
<feature type="chain" id="PRO_0000200397" description="Cytochrome b559 subunit beta">
    <location>
        <begin position="1"/>
        <end position="39"/>
    </location>
</feature>
<feature type="transmembrane region" description="Helical" evidence="1">
    <location>
        <begin position="14"/>
        <end position="30"/>
    </location>
</feature>
<feature type="binding site" description="axial binding residue" evidence="1">
    <location>
        <position position="18"/>
    </location>
    <ligand>
        <name>heme</name>
        <dbReference type="ChEBI" id="CHEBI:30413"/>
        <note>ligand shared with alpha subunit</note>
    </ligand>
    <ligandPart>
        <name>Fe</name>
        <dbReference type="ChEBI" id="CHEBI:18248"/>
    </ligandPart>
</feature>
<organism>
    <name type="scientific">Hordeum vulgare</name>
    <name type="common">Barley</name>
    <dbReference type="NCBI Taxonomy" id="4513"/>
    <lineage>
        <taxon>Eukaryota</taxon>
        <taxon>Viridiplantae</taxon>
        <taxon>Streptophyta</taxon>
        <taxon>Embryophyta</taxon>
        <taxon>Tracheophyta</taxon>
        <taxon>Spermatophyta</taxon>
        <taxon>Magnoliopsida</taxon>
        <taxon>Liliopsida</taxon>
        <taxon>Poales</taxon>
        <taxon>Poaceae</taxon>
        <taxon>BOP clade</taxon>
        <taxon>Pooideae</taxon>
        <taxon>Triticodae</taxon>
        <taxon>Triticeae</taxon>
        <taxon>Hordeinae</taxon>
        <taxon>Hordeum</taxon>
    </lineage>
</organism>
<evidence type="ECO:0000255" key="1">
    <source>
        <dbReference type="HAMAP-Rule" id="MF_00643"/>
    </source>
</evidence>
<evidence type="ECO:0000269" key="2">
    <source>
    </source>
</evidence>
<evidence type="ECO:0000305" key="3">
    <source>
    </source>
</evidence>
<accession>P60126</accession>
<accession>A1E9K6</accession>
<accession>P05171</accession>
<accession>P09198</accession>
<accession>Q95H58</accession>
<accession>Q9M3L1</accession>
<name>PSBF_HORVU</name>
<geneLocation type="chloroplast"/>
<sequence>MTIDRTYPIFTVRWLAIHGLAVPTVFFLGSISAMQFIQR</sequence>
<reference key="1">
    <citation type="journal article" date="1989" name="Nucleic Acids Res.">
        <title>Nucleotide sequence of the barley chloroplast psbE, psbF genes and flanking regions.</title>
        <authorList>
            <person name="Chakhmakhcheva O.G."/>
            <person name="Andreeva A.V."/>
            <person name="Buryakova A.A."/>
            <person name="Reverdatto S.V."/>
            <person name="Efimov V.A."/>
        </authorList>
    </citation>
    <scope>NUCLEOTIDE SEQUENCE [GENOMIC DNA]</scope>
    <source>
        <strain>cv. Sabarlis</strain>
    </source>
</reference>
<reference key="2">
    <citation type="journal article" date="1991" name="Bioorg. Khim.">
        <title>Photosystem II of rye. Nucleotide sequence of the psbB, psbC, psbE, psbF, psbH genes of rye and chloroplast DNA regions adjacent to them.</title>
        <authorList>
            <person name="Efimov V.A."/>
            <person name="Andreeva A.V."/>
            <person name="Reverdatto S.V."/>
            <person name="Chakhmakhcheva O.G."/>
        </authorList>
    </citation>
    <scope>NUCLEOTIDE SEQUENCE [GENOMIC DNA]</scope>
    <source>
        <strain>cv. Sabarlis</strain>
    </source>
</reference>
<reference key="3">
    <citation type="journal article" date="1988" name="Carlsberg Res. Commun.">
        <title>Characterization and in vitro expression of the cytochrome b-559 genes of barley. I. Localization and sequence of the genes.</title>
        <authorList>
            <person name="Krupinska K."/>
            <person name="Berry-Lowe S."/>
        </authorList>
    </citation>
    <scope>NUCLEOTIDE SEQUENCE [GENOMIC DNA]</scope>
</reference>
<reference key="4">
    <citation type="journal article" date="2007" name="Theor. Appl. Genet.">
        <title>Complete chloroplast genome sequences of Hordeum vulgare, Sorghum bicolor and Agrostis stolonifera, and comparative analyses with other grass genomes.</title>
        <authorList>
            <person name="Saski C."/>
            <person name="Lee S.-B."/>
            <person name="Fjellheim S."/>
            <person name="Guda C."/>
            <person name="Jansen R.K."/>
            <person name="Luo H."/>
            <person name="Tomkins J."/>
            <person name="Rognli O.A."/>
            <person name="Daniell H."/>
            <person name="Clarke J.L."/>
        </authorList>
    </citation>
    <scope>NUCLEOTIDE SEQUENCE [LARGE SCALE GENOMIC DNA]</scope>
    <source>
        <strain>cv. Morex</strain>
    </source>
</reference>
<reference key="5">
    <citation type="journal article" date="2009" name="Proteomics">
        <title>Mass spectrometric characterization of membrane integral low molecular weight proteins from photosystem II in barley etioplasts.</title>
        <authorList>
            <person name="Ploescher M."/>
            <person name="Granvogl B."/>
            <person name="Zoryan M."/>
            <person name="Reisinger V."/>
            <person name="Eichacker L.A."/>
        </authorList>
    </citation>
    <scope>IDENTIFICATION BY MASS SPECTROMETRY</scope>
    <scope>SUBUNIT</scope>
    <scope>SUBCELLULAR LOCATION</scope>
    <source>
        <strain>cv. Steffi</strain>
    </source>
</reference>
<gene>
    <name evidence="1" type="primary">psbF</name>
</gene>